<reference key="1">
    <citation type="journal article" date="1996" name="Science">
        <title>Complete genome sequence of the methanogenic archaeon, Methanococcus jannaschii.</title>
        <authorList>
            <person name="Bult C.J."/>
            <person name="White O."/>
            <person name="Olsen G.J."/>
            <person name="Zhou L."/>
            <person name="Fleischmann R.D."/>
            <person name="Sutton G.G."/>
            <person name="Blake J.A."/>
            <person name="FitzGerald L.M."/>
            <person name="Clayton R.A."/>
            <person name="Gocayne J.D."/>
            <person name="Kerlavage A.R."/>
            <person name="Dougherty B.A."/>
            <person name="Tomb J.-F."/>
            <person name="Adams M.D."/>
            <person name="Reich C.I."/>
            <person name="Overbeek R."/>
            <person name="Kirkness E.F."/>
            <person name="Weinstock K.G."/>
            <person name="Merrick J.M."/>
            <person name="Glodek A."/>
            <person name="Scott J.L."/>
            <person name="Geoghagen N.S.M."/>
            <person name="Weidman J.F."/>
            <person name="Fuhrmann J.L."/>
            <person name="Nguyen D."/>
            <person name="Utterback T.R."/>
            <person name="Kelley J.M."/>
            <person name="Peterson J.D."/>
            <person name="Sadow P.W."/>
            <person name="Hanna M.C."/>
            <person name="Cotton M.D."/>
            <person name="Roberts K.M."/>
            <person name="Hurst M.A."/>
            <person name="Kaine B.P."/>
            <person name="Borodovsky M."/>
            <person name="Klenk H.-P."/>
            <person name="Fraser C.M."/>
            <person name="Smith H.O."/>
            <person name="Woese C.R."/>
            <person name="Venter J.C."/>
        </authorList>
    </citation>
    <scope>NUCLEOTIDE SEQUENCE [LARGE SCALE GENOMIC DNA]</scope>
    <source>
        <strain>ATCC 43067 / DSM 2661 / JAL-1 / JCM 10045 / NBRC 100440</strain>
    </source>
</reference>
<evidence type="ECO:0000255" key="1"/>
<evidence type="ECO:0000305" key="2"/>
<dbReference type="EMBL" id="L77117">
    <property type="protein sequence ID" value="AAB99198.1"/>
    <property type="molecule type" value="Genomic_DNA"/>
</dbReference>
<dbReference type="PIR" id="D64448">
    <property type="entry name" value="D64448"/>
</dbReference>
<dbReference type="RefSeq" id="WP_010870702.1">
    <property type="nucleotide sequence ID" value="NC_000909.1"/>
</dbReference>
<dbReference type="PaxDb" id="243232-MJ_1189"/>
<dbReference type="EnsemblBacteria" id="AAB99198">
    <property type="protein sequence ID" value="AAB99198"/>
    <property type="gene ID" value="MJ_1189"/>
</dbReference>
<dbReference type="GeneID" id="1452087"/>
<dbReference type="KEGG" id="mja:MJ_1189"/>
<dbReference type="eggNOG" id="arCOG02880">
    <property type="taxonomic scope" value="Archaea"/>
</dbReference>
<dbReference type="HOGENOM" id="CLU_083802_0_0_2"/>
<dbReference type="InParanoid" id="Q58589"/>
<dbReference type="OrthoDB" id="60637at2157"/>
<dbReference type="PhylomeDB" id="Q58589"/>
<dbReference type="Proteomes" id="UP000000805">
    <property type="component" value="Chromosome"/>
</dbReference>
<dbReference type="GO" id="GO:0005886">
    <property type="term" value="C:plasma membrane"/>
    <property type="evidence" value="ECO:0007669"/>
    <property type="project" value="UniProtKB-SubCell"/>
</dbReference>
<dbReference type="InterPro" id="IPR025098">
    <property type="entry name" value="DUF4013"/>
</dbReference>
<dbReference type="Pfam" id="PF13197">
    <property type="entry name" value="DUF4013"/>
    <property type="match status" value="1"/>
</dbReference>
<gene>
    <name type="ordered locus">MJ1189</name>
</gene>
<organism>
    <name type="scientific">Methanocaldococcus jannaschii (strain ATCC 43067 / DSM 2661 / JAL-1 / JCM 10045 / NBRC 100440)</name>
    <name type="common">Methanococcus jannaschii</name>
    <dbReference type="NCBI Taxonomy" id="243232"/>
    <lineage>
        <taxon>Archaea</taxon>
        <taxon>Methanobacteriati</taxon>
        <taxon>Methanobacteriota</taxon>
        <taxon>Methanomada group</taxon>
        <taxon>Methanococci</taxon>
        <taxon>Methanococcales</taxon>
        <taxon>Methanocaldococcaceae</taxon>
        <taxon>Methanocaldococcus</taxon>
    </lineage>
</organism>
<name>Y1189_METJA</name>
<proteinExistence type="predicted"/>
<accession>Q58589</accession>
<comment type="subcellular location">
    <subcellularLocation>
        <location evidence="2">Cell membrane</location>
        <topology evidence="2">Multi-pass membrane protein</topology>
    </subcellularLocation>
</comment>
<comment type="similarity">
    <text evidence="2">To M.jannaschii MJ0233.</text>
</comment>
<keyword id="KW-1003">Cell membrane</keyword>
<keyword id="KW-0472">Membrane</keyword>
<keyword id="KW-1185">Reference proteome</keyword>
<keyword id="KW-0812">Transmembrane</keyword>
<keyword id="KW-1133">Transmembrane helix</keyword>
<feature type="chain" id="PRO_0000107210" description="Uncharacterized protein MJ1189">
    <location>
        <begin position="1"/>
        <end position="283"/>
    </location>
</feature>
<feature type="transmembrane region" description="Helical" evidence="1">
    <location>
        <begin position="28"/>
        <end position="48"/>
    </location>
</feature>
<feature type="transmembrane region" description="Helical" evidence="1">
    <location>
        <begin position="65"/>
        <end position="85"/>
    </location>
</feature>
<feature type="transmembrane region" description="Helical" evidence="1">
    <location>
        <begin position="113"/>
        <end position="133"/>
    </location>
</feature>
<feature type="transmembrane region" description="Helical" evidence="1">
    <location>
        <begin position="135"/>
        <end position="155"/>
    </location>
</feature>
<feature type="transmembrane region" description="Helical" evidence="1">
    <location>
        <begin position="200"/>
        <end position="220"/>
    </location>
</feature>
<feature type="transmembrane region" description="Helical" evidence="1">
    <location>
        <begin position="246"/>
        <end position="266"/>
    </location>
</feature>
<sequence length="283" mass="31673">MKKLEYYLKDAFYYVLSDVKKGIVGGLLSSTSGAIGAIFGIILSILLIHNINPNDVVGLDNNILLTSLIVASFGFLIALIIGFILDGYYVRVMKTTVENYDVLPDWDDIAELLKRGFLYWIGNIILSIIFMIVPILFIIFGVFLIFLPLVGIVFIGIGFLLLFVSTIALLIYEGLAEVNYSVKGFSGFFEFKEIFRMINLNYIILLIIVGVIVIVINFVVQLPFILLKIFAISPARYSTFSSSETIVDVISAVISAFVGFYTAVFAKRAIALYYKDRVEELKK</sequence>
<protein>
    <recommendedName>
        <fullName>Uncharacterized protein MJ1189</fullName>
    </recommendedName>
</protein>